<protein>
    <recommendedName>
        <fullName>NADH dehydrogenase [ubiquinone] 1 beta subcomplex subunit 9</fullName>
    </recommendedName>
    <alternativeName>
        <fullName>Complex I-B22</fullName>
        <shortName>CI-B22</shortName>
    </alternativeName>
    <alternativeName>
        <fullName>NADH-ubiquinone oxidoreductase B22 subunit</fullName>
    </alternativeName>
</protein>
<evidence type="ECO:0000250" key="1">
    <source>
        <dbReference type="UniProtKB" id="Q9Y6M9"/>
    </source>
</evidence>
<evidence type="ECO:0000269" key="2">
    <source>
    </source>
</evidence>
<evidence type="ECO:0000305" key="3"/>
<evidence type="ECO:0007744" key="4">
    <source>
        <dbReference type="PDB" id="8PW5"/>
    </source>
</evidence>
<evidence type="ECO:0007829" key="5">
    <source>
        <dbReference type="PDB" id="6G2J"/>
    </source>
</evidence>
<evidence type="ECO:0007829" key="6">
    <source>
        <dbReference type="PDB" id="8OM1"/>
    </source>
</evidence>
<evidence type="ECO:0007829" key="7">
    <source>
        <dbReference type="PDB" id="8RGR"/>
    </source>
</evidence>
<accession>Q9CQJ8</accession>
<feature type="initiator methionine" description="Removed" evidence="1">
    <location>
        <position position="1"/>
    </location>
</feature>
<feature type="chain" id="PRO_0000174307" description="NADH dehydrogenase [ubiquinone] 1 beta subcomplex subunit 9">
    <location>
        <begin position="2"/>
        <end position="179"/>
    </location>
</feature>
<feature type="modified residue" description="N-acetylalanine" evidence="1">
    <location>
        <position position="2"/>
    </location>
</feature>
<feature type="modified residue" description="Phosphoserine" evidence="1">
    <location>
        <position position="85"/>
    </location>
</feature>
<feature type="helix" evidence="6">
    <location>
        <begin position="12"/>
        <end position="31"/>
    </location>
</feature>
<feature type="helix" evidence="6">
    <location>
        <begin position="34"/>
        <end position="49"/>
    </location>
</feature>
<feature type="turn" evidence="6">
    <location>
        <begin position="50"/>
        <end position="53"/>
    </location>
</feature>
<feature type="strand" evidence="7">
    <location>
        <begin position="55"/>
        <end position="57"/>
    </location>
</feature>
<feature type="helix" evidence="6">
    <location>
        <begin position="58"/>
        <end position="74"/>
    </location>
</feature>
<feature type="strand" evidence="5">
    <location>
        <begin position="85"/>
        <end position="88"/>
    </location>
</feature>
<feature type="turn" evidence="6">
    <location>
        <begin position="89"/>
        <end position="94"/>
    </location>
</feature>
<feature type="helix" evidence="6">
    <location>
        <begin position="95"/>
        <end position="97"/>
    </location>
</feature>
<feature type="helix" evidence="6">
    <location>
        <begin position="101"/>
        <end position="106"/>
    </location>
</feature>
<feature type="helix" evidence="6">
    <location>
        <begin position="109"/>
        <end position="112"/>
    </location>
</feature>
<feature type="helix" evidence="6">
    <location>
        <begin position="116"/>
        <end position="142"/>
    </location>
</feature>
<feature type="strand" evidence="6">
    <location>
        <begin position="146"/>
        <end position="148"/>
    </location>
</feature>
<feature type="strand" evidence="6">
    <location>
        <begin position="159"/>
        <end position="161"/>
    </location>
</feature>
<feature type="helix" evidence="6">
    <location>
        <begin position="168"/>
        <end position="171"/>
    </location>
</feature>
<name>NDUB9_MOUSE</name>
<dbReference type="EMBL" id="AK002254">
    <property type="protein sequence ID" value="BAB21968.1"/>
    <property type="molecule type" value="mRNA"/>
</dbReference>
<dbReference type="EMBL" id="AK003540">
    <property type="protein sequence ID" value="BAB22846.1"/>
    <property type="molecule type" value="mRNA"/>
</dbReference>
<dbReference type="EMBL" id="AK004522">
    <property type="protein sequence ID" value="BAB23345.1"/>
    <property type="molecule type" value="mRNA"/>
</dbReference>
<dbReference type="EMBL" id="BC031539">
    <property type="protein sequence ID" value="AAH31539.1"/>
    <property type="molecule type" value="mRNA"/>
</dbReference>
<dbReference type="CCDS" id="CCDS27495.1"/>
<dbReference type="RefSeq" id="NP_075661.1">
    <property type="nucleotide sequence ID" value="NM_023172.4"/>
</dbReference>
<dbReference type="PDB" id="6G2J">
    <property type="method" value="EM"/>
    <property type="resolution" value="3.30 A"/>
    <property type="chains" value="n=1-179"/>
</dbReference>
<dbReference type="PDB" id="6G72">
    <property type="method" value="EM"/>
    <property type="resolution" value="3.90 A"/>
    <property type="chains" value="n=1-179"/>
</dbReference>
<dbReference type="PDB" id="6ZR2">
    <property type="method" value="EM"/>
    <property type="resolution" value="3.10 A"/>
    <property type="chains" value="n=1-179"/>
</dbReference>
<dbReference type="PDB" id="6ZTQ">
    <property type="method" value="EM"/>
    <property type="resolution" value="3.00 A"/>
    <property type="chains" value="n=1-179"/>
</dbReference>
<dbReference type="PDB" id="7AK5">
    <property type="method" value="EM"/>
    <property type="resolution" value="3.17 A"/>
    <property type="chains" value="n=1-179"/>
</dbReference>
<dbReference type="PDB" id="7AK6">
    <property type="method" value="EM"/>
    <property type="resolution" value="3.82 A"/>
    <property type="chains" value="n=1-179"/>
</dbReference>
<dbReference type="PDB" id="7B93">
    <property type="method" value="EM"/>
    <property type="resolution" value="3.04 A"/>
    <property type="chains" value="n=1-179"/>
</dbReference>
<dbReference type="PDB" id="7PSA">
    <property type="method" value="EM"/>
    <property type="resolution" value="3.40 A"/>
    <property type="chains" value="n=1-179"/>
</dbReference>
<dbReference type="PDB" id="8C2S">
    <property type="method" value="EM"/>
    <property type="resolution" value="3.90 A"/>
    <property type="chains" value="n=1-179"/>
</dbReference>
<dbReference type="PDB" id="8CA3">
    <property type="method" value="EM"/>
    <property type="resolution" value="3.20 A"/>
    <property type="chains" value="n=1-179"/>
</dbReference>
<dbReference type="PDB" id="8CA5">
    <property type="method" value="EM"/>
    <property type="resolution" value="3.90 A"/>
    <property type="chains" value="n=1-179"/>
</dbReference>
<dbReference type="PDB" id="8IAO">
    <property type="method" value="EM"/>
    <property type="resolution" value="4.20 A"/>
    <property type="chains" value="n=1-179"/>
</dbReference>
<dbReference type="PDB" id="8IAQ">
    <property type="method" value="EM"/>
    <property type="resolution" value="3.40 A"/>
    <property type="chains" value="n=1-179"/>
</dbReference>
<dbReference type="PDB" id="8IB4">
    <property type="method" value="EM"/>
    <property type="resolution" value="4.30 A"/>
    <property type="chains" value="n=1-179"/>
</dbReference>
<dbReference type="PDB" id="8IB6">
    <property type="method" value="EM"/>
    <property type="resolution" value="3.30 A"/>
    <property type="chains" value="n=1-179"/>
</dbReference>
<dbReference type="PDB" id="8IB9">
    <property type="method" value="EM"/>
    <property type="resolution" value="4.30 A"/>
    <property type="chains" value="n=1-179"/>
</dbReference>
<dbReference type="PDB" id="8IBB">
    <property type="method" value="EM"/>
    <property type="resolution" value="3.30 A"/>
    <property type="chains" value="n=1-179"/>
</dbReference>
<dbReference type="PDB" id="8IBD">
    <property type="method" value="EM"/>
    <property type="resolution" value="4.20 A"/>
    <property type="chains" value="n=1-179"/>
</dbReference>
<dbReference type="PDB" id="8IBF">
    <property type="method" value="EM"/>
    <property type="resolution" value="3.30 A"/>
    <property type="chains" value="n=1-179"/>
</dbReference>
<dbReference type="PDB" id="8IC2">
    <property type="method" value="EM"/>
    <property type="resolution" value="6.30 A"/>
    <property type="chains" value="n=1-179"/>
</dbReference>
<dbReference type="PDB" id="8IC4">
    <property type="method" value="EM"/>
    <property type="resolution" value="3.20 A"/>
    <property type="chains" value="n=1-179"/>
</dbReference>
<dbReference type="PDB" id="8OLT">
    <property type="method" value="EM"/>
    <property type="resolution" value="2.84 A"/>
    <property type="chains" value="n=1-179"/>
</dbReference>
<dbReference type="PDB" id="8OM1">
    <property type="method" value="EM"/>
    <property type="resolution" value="2.39 A"/>
    <property type="chains" value="n=1-179"/>
</dbReference>
<dbReference type="PDB" id="8PW5">
    <property type="method" value="EM"/>
    <property type="resolution" value="3.60 A"/>
    <property type="chains" value="n1=1-179"/>
</dbReference>
<dbReference type="PDB" id="8PW6">
    <property type="method" value="EM"/>
    <property type="resolution" value="3.30 A"/>
    <property type="chains" value="n1=1-179"/>
</dbReference>
<dbReference type="PDB" id="8PW7">
    <property type="method" value="EM"/>
    <property type="resolution" value="3.50 A"/>
    <property type="chains" value="n1=1-179"/>
</dbReference>
<dbReference type="PDB" id="8RGP">
    <property type="method" value="EM"/>
    <property type="resolution" value="3.00 A"/>
    <property type="chains" value="n=1-179"/>
</dbReference>
<dbReference type="PDB" id="8RGQ">
    <property type="method" value="EM"/>
    <property type="resolution" value="3.00 A"/>
    <property type="chains" value="n=1-179"/>
</dbReference>
<dbReference type="PDB" id="8RGR">
    <property type="method" value="EM"/>
    <property type="resolution" value="2.90 A"/>
    <property type="chains" value="n=1-179"/>
</dbReference>
<dbReference type="PDB" id="8RGT">
    <property type="method" value="EM"/>
    <property type="resolution" value="3.10 A"/>
    <property type="chains" value="n=1-179"/>
</dbReference>
<dbReference type="PDB" id="8UCA">
    <property type="method" value="EM"/>
    <property type="resolution" value="3.70 A"/>
    <property type="chains" value="B9/b9=1-179"/>
</dbReference>
<dbReference type="PDBsum" id="6G2J"/>
<dbReference type="PDBsum" id="6G72"/>
<dbReference type="PDBsum" id="6ZR2"/>
<dbReference type="PDBsum" id="6ZTQ"/>
<dbReference type="PDBsum" id="7AK5"/>
<dbReference type="PDBsum" id="7AK6"/>
<dbReference type="PDBsum" id="7B93"/>
<dbReference type="PDBsum" id="7PSA"/>
<dbReference type="PDBsum" id="8C2S"/>
<dbReference type="PDBsum" id="8CA3"/>
<dbReference type="PDBsum" id="8CA5"/>
<dbReference type="PDBsum" id="8IAO"/>
<dbReference type="PDBsum" id="8IAQ"/>
<dbReference type="PDBsum" id="8IB4"/>
<dbReference type="PDBsum" id="8IB6"/>
<dbReference type="PDBsum" id="8IB9"/>
<dbReference type="PDBsum" id="8IBB"/>
<dbReference type="PDBsum" id="8IBD"/>
<dbReference type="PDBsum" id="8IBF"/>
<dbReference type="PDBsum" id="8IC2"/>
<dbReference type="PDBsum" id="8IC4"/>
<dbReference type="PDBsum" id="8OLT"/>
<dbReference type="PDBsum" id="8OM1"/>
<dbReference type="PDBsum" id="8PW5"/>
<dbReference type="PDBsum" id="8PW6"/>
<dbReference type="PDBsum" id="8PW7"/>
<dbReference type="PDBsum" id="8RGP"/>
<dbReference type="PDBsum" id="8RGQ"/>
<dbReference type="PDBsum" id="8RGR"/>
<dbReference type="PDBsum" id="8RGT"/>
<dbReference type="PDBsum" id="8UCA"/>
<dbReference type="EMDB" id="EMD-11377"/>
<dbReference type="EMDB" id="EMD-11424"/>
<dbReference type="EMDB" id="EMD-11810"/>
<dbReference type="EMDB" id="EMD-11811"/>
<dbReference type="EMDB" id="EMD-12095"/>
<dbReference type="EMDB" id="EMD-13611"/>
<dbReference type="EMDB" id="EMD-16398"/>
<dbReference type="EMDB" id="EMD-16516"/>
<dbReference type="EMDB" id="EMD-16518"/>
<dbReference type="EMDB" id="EMD-16962"/>
<dbReference type="EMDB" id="EMD-16965"/>
<dbReference type="EMDB" id="EMD-17989"/>
<dbReference type="EMDB" id="EMD-17990"/>
<dbReference type="EMDB" id="EMD-17991"/>
<dbReference type="EMDB" id="EMD-19145"/>
<dbReference type="EMDB" id="EMD-19146"/>
<dbReference type="EMDB" id="EMD-19147"/>
<dbReference type="EMDB" id="EMD-19148"/>
<dbReference type="EMDB" id="EMD-35313"/>
<dbReference type="EMDB" id="EMD-35315"/>
<dbReference type="EMDB" id="EMD-35331"/>
<dbReference type="EMDB" id="EMD-35333"/>
<dbReference type="EMDB" id="EMD-35336"/>
<dbReference type="EMDB" id="EMD-35338"/>
<dbReference type="EMDB" id="EMD-35340"/>
<dbReference type="EMDB" id="EMD-35342"/>
<dbReference type="EMDB" id="EMD-35352"/>
<dbReference type="EMDB" id="EMD-35354"/>
<dbReference type="EMDB" id="EMD-42122"/>
<dbReference type="EMDB" id="EMD-4345"/>
<dbReference type="EMDB" id="EMD-4356"/>
<dbReference type="SMR" id="Q9CQJ8"/>
<dbReference type="BioGRID" id="211305">
    <property type="interactions" value="14"/>
</dbReference>
<dbReference type="ComplexPortal" id="CPX-266">
    <property type="entry name" value="Mitochondrial respiratory chain complex I"/>
</dbReference>
<dbReference type="CORUM" id="Q9CQJ8"/>
<dbReference type="FunCoup" id="Q9CQJ8">
    <property type="interactions" value="2184"/>
</dbReference>
<dbReference type="IntAct" id="Q9CQJ8">
    <property type="interactions" value="3"/>
</dbReference>
<dbReference type="STRING" id="10090.ENSMUSP00000022980"/>
<dbReference type="GlyGen" id="Q9CQJ8">
    <property type="glycosylation" value="1 site, 1 O-linked glycan (1 site)"/>
</dbReference>
<dbReference type="iPTMnet" id="Q9CQJ8"/>
<dbReference type="PhosphoSitePlus" id="Q9CQJ8"/>
<dbReference type="SwissPalm" id="Q9CQJ8"/>
<dbReference type="jPOST" id="Q9CQJ8"/>
<dbReference type="PaxDb" id="10090-ENSMUSP00000022980"/>
<dbReference type="PeptideAtlas" id="Q9CQJ8"/>
<dbReference type="ProteomicsDB" id="252943"/>
<dbReference type="Pumba" id="Q9CQJ8"/>
<dbReference type="Antibodypedia" id="27088">
    <property type="antibodies" value="352 antibodies from 35 providers"/>
</dbReference>
<dbReference type="DNASU" id="66218"/>
<dbReference type="Ensembl" id="ENSMUST00000022980.5">
    <property type="protein sequence ID" value="ENSMUSP00000022980.4"/>
    <property type="gene ID" value="ENSMUSG00000022354.5"/>
</dbReference>
<dbReference type="GeneID" id="66218"/>
<dbReference type="KEGG" id="mmu:66218"/>
<dbReference type="UCSC" id="uc007vtw.1">
    <property type="organism name" value="mouse"/>
</dbReference>
<dbReference type="AGR" id="MGI:1913468"/>
<dbReference type="CTD" id="4715"/>
<dbReference type="MGI" id="MGI:1913468">
    <property type="gene designation" value="Ndufb9"/>
</dbReference>
<dbReference type="VEuPathDB" id="HostDB:ENSMUSG00000022354"/>
<dbReference type="eggNOG" id="KOG3466">
    <property type="taxonomic scope" value="Eukaryota"/>
</dbReference>
<dbReference type="GeneTree" id="ENSGT00390000005809"/>
<dbReference type="HOGENOM" id="CLU_108081_0_0_1"/>
<dbReference type="InParanoid" id="Q9CQJ8"/>
<dbReference type="OMA" id="CVFRDKY"/>
<dbReference type="OrthoDB" id="13598at2759"/>
<dbReference type="PhylomeDB" id="Q9CQJ8"/>
<dbReference type="TreeFam" id="TF315148"/>
<dbReference type="Reactome" id="R-MMU-611105">
    <property type="pathway name" value="Respiratory electron transport"/>
</dbReference>
<dbReference type="Reactome" id="R-MMU-6799198">
    <property type="pathway name" value="Complex I biogenesis"/>
</dbReference>
<dbReference type="BioGRID-ORCS" id="66218">
    <property type="hits" value="24 hits in 77 CRISPR screens"/>
</dbReference>
<dbReference type="CD-CODE" id="CE726F99">
    <property type="entry name" value="Postsynaptic density"/>
</dbReference>
<dbReference type="ChiTaRS" id="Ndufb9">
    <property type="organism name" value="mouse"/>
</dbReference>
<dbReference type="PRO" id="PR:Q9CQJ8"/>
<dbReference type="Proteomes" id="UP000000589">
    <property type="component" value="Chromosome 15"/>
</dbReference>
<dbReference type="RNAct" id="Q9CQJ8">
    <property type="molecule type" value="protein"/>
</dbReference>
<dbReference type="Bgee" id="ENSMUSG00000022354">
    <property type="expression patterns" value="Expressed in facial nucleus and 254 other cell types or tissues"/>
</dbReference>
<dbReference type="GO" id="GO:0005743">
    <property type="term" value="C:mitochondrial inner membrane"/>
    <property type="evidence" value="ECO:0000314"/>
    <property type="project" value="UniProtKB"/>
</dbReference>
<dbReference type="GO" id="GO:0005739">
    <property type="term" value="C:mitochondrion"/>
    <property type="evidence" value="ECO:0007005"/>
    <property type="project" value="MGI"/>
</dbReference>
<dbReference type="GO" id="GO:0045271">
    <property type="term" value="C:respiratory chain complex I"/>
    <property type="evidence" value="ECO:0000314"/>
    <property type="project" value="UniProtKB"/>
</dbReference>
<dbReference type="GO" id="GO:0009060">
    <property type="term" value="P:aerobic respiration"/>
    <property type="evidence" value="ECO:0000303"/>
    <property type="project" value="ComplexPortal"/>
</dbReference>
<dbReference type="GO" id="GO:0006120">
    <property type="term" value="P:mitochondrial electron transport, NADH to ubiquinone"/>
    <property type="evidence" value="ECO:0007669"/>
    <property type="project" value="InterPro"/>
</dbReference>
<dbReference type="GO" id="GO:0042776">
    <property type="term" value="P:proton motive force-driven mitochondrial ATP synthesis"/>
    <property type="evidence" value="ECO:0000303"/>
    <property type="project" value="ComplexPortal"/>
</dbReference>
<dbReference type="CDD" id="cd20263">
    <property type="entry name" value="Complex1_LYR_NDUFB9_LYRM3"/>
    <property type="match status" value="1"/>
</dbReference>
<dbReference type="InterPro" id="IPR008011">
    <property type="entry name" value="Complex1_LYR_dom"/>
</dbReference>
<dbReference type="InterPro" id="IPR045292">
    <property type="entry name" value="Complex1_LYR_NDUFB9_LYRM3"/>
</dbReference>
<dbReference type="InterPro" id="IPR033034">
    <property type="entry name" value="NDUFB9"/>
</dbReference>
<dbReference type="PANTHER" id="PTHR12868:SF0">
    <property type="entry name" value="NADH DEHYDROGENASE [UBIQUINONE] 1 BETA SUBCOMPLEX SUBUNIT 9"/>
    <property type="match status" value="1"/>
</dbReference>
<dbReference type="PANTHER" id="PTHR12868">
    <property type="entry name" value="NADH-UBIQUINONE OXIDOREDUCTASE B22 SUBUNIT"/>
    <property type="match status" value="1"/>
</dbReference>
<dbReference type="Pfam" id="PF05347">
    <property type="entry name" value="Complex1_LYR"/>
    <property type="match status" value="1"/>
</dbReference>
<sequence>MAFCAPPAYLTHQQKVLRLYKRALRHLESWCIHRDKYRYFACLMRARFEEHKNEKDMMRATQLLREAEEEFWQNQHPQPYIFPDSPGGTSFERYECYKVPEWCLDYWHPSEKAMYPDYFSKREQWKKLRMESWDREVKQLQEETSPDGIMTEALPPARREGDLPPLWWHIVTRPRERPT</sequence>
<gene>
    <name type="primary">Ndufb9</name>
</gene>
<reference key="1">
    <citation type="journal article" date="2005" name="Science">
        <title>The transcriptional landscape of the mammalian genome.</title>
        <authorList>
            <person name="Carninci P."/>
            <person name="Kasukawa T."/>
            <person name="Katayama S."/>
            <person name="Gough J."/>
            <person name="Frith M.C."/>
            <person name="Maeda N."/>
            <person name="Oyama R."/>
            <person name="Ravasi T."/>
            <person name="Lenhard B."/>
            <person name="Wells C."/>
            <person name="Kodzius R."/>
            <person name="Shimokawa K."/>
            <person name="Bajic V.B."/>
            <person name="Brenner S.E."/>
            <person name="Batalov S."/>
            <person name="Forrest A.R."/>
            <person name="Zavolan M."/>
            <person name="Davis M.J."/>
            <person name="Wilming L.G."/>
            <person name="Aidinis V."/>
            <person name="Allen J.E."/>
            <person name="Ambesi-Impiombato A."/>
            <person name="Apweiler R."/>
            <person name="Aturaliya R.N."/>
            <person name="Bailey T.L."/>
            <person name="Bansal M."/>
            <person name="Baxter L."/>
            <person name="Beisel K.W."/>
            <person name="Bersano T."/>
            <person name="Bono H."/>
            <person name="Chalk A.M."/>
            <person name="Chiu K.P."/>
            <person name="Choudhary V."/>
            <person name="Christoffels A."/>
            <person name="Clutterbuck D.R."/>
            <person name="Crowe M.L."/>
            <person name="Dalla E."/>
            <person name="Dalrymple B.P."/>
            <person name="de Bono B."/>
            <person name="Della Gatta G."/>
            <person name="di Bernardo D."/>
            <person name="Down T."/>
            <person name="Engstrom P."/>
            <person name="Fagiolini M."/>
            <person name="Faulkner G."/>
            <person name="Fletcher C.F."/>
            <person name="Fukushima T."/>
            <person name="Furuno M."/>
            <person name="Futaki S."/>
            <person name="Gariboldi M."/>
            <person name="Georgii-Hemming P."/>
            <person name="Gingeras T.R."/>
            <person name="Gojobori T."/>
            <person name="Green R.E."/>
            <person name="Gustincich S."/>
            <person name="Harbers M."/>
            <person name="Hayashi Y."/>
            <person name="Hensch T.K."/>
            <person name="Hirokawa N."/>
            <person name="Hill D."/>
            <person name="Huminiecki L."/>
            <person name="Iacono M."/>
            <person name="Ikeo K."/>
            <person name="Iwama A."/>
            <person name="Ishikawa T."/>
            <person name="Jakt M."/>
            <person name="Kanapin A."/>
            <person name="Katoh M."/>
            <person name="Kawasawa Y."/>
            <person name="Kelso J."/>
            <person name="Kitamura H."/>
            <person name="Kitano H."/>
            <person name="Kollias G."/>
            <person name="Krishnan S.P."/>
            <person name="Kruger A."/>
            <person name="Kummerfeld S.K."/>
            <person name="Kurochkin I.V."/>
            <person name="Lareau L.F."/>
            <person name="Lazarevic D."/>
            <person name="Lipovich L."/>
            <person name="Liu J."/>
            <person name="Liuni S."/>
            <person name="McWilliam S."/>
            <person name="Madan Babu M."/>
            <person name="Madera M."/>
            <person name="Marchionni L."/>
            <person name="Matsuda H."/>
            <person name="Matsuzawa S."/>
            <person name="Miki H."/>
            <person name="Mignone F."/>
            <person name="Miyake S."/>
            <person name="Morris K."/>
            <person name="Mottagui-Tabar S."/>
            <person name="Mulder N."/>
            <person name="Nakano N."/>
            <person name="Nakauchi H."/>
            <person name="Ng P."/>
            <person name="Nilsson R."/>
            <person name="Nishiguchi S."/>
            <person name="Nishikawa S."/>
            <person name="Nori F."/>
            <person name="Ohara O."/>
            <person name="Okazaki Y."/>
            <person name="Orlando V."/>
            <person name="Pang K.C."/>
            <person name="Pavan W.J."/>
            <person name="Pavesi G."/>
            <person name="Pesole G."/>
            <person name="Petrovsky N."/>
            <person name="Piazza S."/>
            <person name="Reed J."/>
            <person name="Reid J.F."/>
            <person name="Ring B.Z."/>
            <person name="Ringwald M."/>
            <person name="Rost B."/>
            <person name="Ruan Y."/>
            <person name="Salzberg S.L."/>
            <person name="Sandelin A."/>
            <person name="Schneider C."/>
            <person name="Schoenbach C."/>
            <person name="Sekiguchi K."/>
            <person name="Semple C.A."/>
            <person name="Seno S."/>
            <person name="Sessa L."/>
            <person name="Sheng Y."/>
            <person name="Shibata Y."/>
            <person name="Shimada H."/>
            <person name="Shimada K."/>
            <person name="Silva D."/>
            <person name="Sinclair B."/>
            <person name="Sperling S."/>
            <person name="Stupka E."/>
            <person name="Sugiura K."/>
            <person name="Sultana R."/>
            <person name="Takenaka Y."/>
            <person name="Taki K."/>
            <person name="Tammoja K."/>
            <person name="Tan S.L."/>
            <person name="Tang S."/>
            <person name="Taylor M.S."/>
            <person name="Tegner J."/>
            <person name="Teichmann S.A."/>
            <person name="Ueda H.R."/>
            <person name="van Nimwegen E."/>
            <person name="Verardo R."/>
            <person name="Wei C.L."/>
            <person name="Yagi K."/>
            <person name="Yamanishi H."/>
            <person name="Zabarovsky E."/>
            <person name="Zhu S."/>
            <person name="Zimmer A."/>
            <person name="Hide W."/>
            <person name="Bult C."/>
            <person name="Grimmond S.M."/>
            <person name="Teasdale R.D."/>
            <person name="Liu E.T."/>
            <person name="Brusic V."/>
            <person name="Quackenbush J."/>
            <person name="Wahlestedt C."/>
            <person name="Mattick J.S."/>
            <person name="Hume D.A."/>
            <person name="Kai C."/>
            <person name="Sasaki D."/>
            <person name="Tomaru Y."/>
            <person name="Fukuda S."/>
            <person name="Kanamori-Katayama M."/>
            <person name="Suzuki M."/>
            <person name="Aoki J."/>
            <person name="Arakawa T."/>
            <person name="Iida J."/>
            <person name="Imamura K."/>
            <person name="Itoh M."/>
            <person name="Kato T."/>
            <person name="Kawaji H."/>
            <person name="Kawagashira N."/>
            <person name="Kawashima T."/>
            <person name="Kojima M."/>
            <person name="Kondo S."/>
            <person name="Konno H."/>
            <person name="Nakano K."/>
            <person name="Ninomiya N."/>
            <person name="Nishio T."/>
            <person name="Okada M."/>
            <person name="Plessy C."/>
            <person name="Shibata K."/>
            <person name="Shiraki T."/>
            <person name="Suzuki S."/>
            <person name="Tagami M."/>
            <person name="Waki K."/>
            <person name="Watahiki A."/>
            <person name="Okamura-Oho Y."/>
            <person name="Suzuki H."/>
            <person name="Kawai J."/>
            <person name="Hayashizaki Y."/>
        </authorList>
    </citation>
    <scope>NUCLEOTIDE SEQUENCE [LARGE SCALE MRNA]</scope>
    <source>
        <strain>C57BL/6J</strain>
        <tissue>Embryo</tissue>
        <tissue>Kidney</tissue>
    </source>
</reference>
<reference key="2">
    <citation type="journal article" date="2004" name="Genome Res.">
        <title>The status, quality, and expansion of the NIH full-length cDNA project: the Mammalian Gene Collection (MGC).</title>
        <authorList>
            <consortium name="The MGC Project Team"/>
        </authorList>
    </citation>
    <scope>NUCLEOTIDE SEQUENCE [LARGE SCALE MRNA]</scope>
</reference>
<reference key="3">
    <citation type="submission" date="2007-04" db="UniProtKB">
        <authorList>
            <person name="Lubec G."/>
            <person name="Kang S.U."/>
        </authorList>
    </citation>
    <scope>PROTEIN SEQUENCE OF 26-34; 39-45; 48-55; 99-121; 139-158 AND 160-175</scope>
    <scope>IDENTIFICATION BY MASS SPECTROMETRY</scope>
    <source>
        <strain>C57BL/6J</strain>
        <tissue>Brain</tissue>
    </source>
</reference>
<reference key="4">
    <citation type="journal article" date="2010" name="Cell">
        <title>A tissue-specific atlas of mouse protein phosphorylation and expression.</title>
        <authorList>
            <person name="Huttlin E.L."/>
            <person name="Jedrychowski M.P."/>
            <person name="Elias J.E."/>
            <person name="Goswami T."/>
            <person name="Rad R."/>
            <person name="Beausoleil S.A."/>
            <person name="Villen J."/>
            <person name="Haas W."/>
            <person name="Sowa M.E."/>
            <person name="Gygi S.P."/>
        </authorList>
    </citation>
    <scope>IDENTIFICATION BY MASS SPECTROMETRY [LARGE SCALE ANALYSIS]</scope>
    <source>
        <tissue>Brain</tissue>
        <tissue>Brown adipose tissue</tissue>
        <tissue>Heart</tissue>
        <tissue>Kidney</tissue>
        <tissue>Liver</tissue>
        <tissue>Lung</tissue>
        <tissue>Pancreas</tissue>
        <tissue>Spleen</tissue>
        <tissue>Testis</tissue>
    </source>
</reference>
<reference evidence="4" key="5">
    <citation type="journal article" date="2024" name="Nat. Struct. Mol. Biol.">
        <title>SCAF1 drives the compositional diversity of mammalian respirasomes.</title>
        <authorList>
            <person name="Vercellino I."/>
            <person name="Sazanov L.A."/>
        </authorList>
    </citation>
    <scope>STRUCTURE BY ELECTRON MICROSCOPY (3.60 ANGSTROMS) IN COMPLEX WITH MITOCHONDRIAL RESPIRATORY SUPERCOMPLEX</scope>
    <scope>FUNCTION</scope>
    <scope>SUBCELLULAR LOCATION</scope>
    <scope>SUBUNIT</scope>
</reference>
<organism>
    <name type="scientific">Mus musculus</name>
    <name type="common">Mouse</name>
    <dbReference type="NCBI Taxonomy" id="10090"/>
    <lineage>
        <taxon>Eukaryota</taxon>
        <taxon>Metazoa</taxon>
        <taxon>Chordata</taxon>
        <taxon>Craniata</taxon>
        <taxon>Vertebrata</taxon>
        <taxon>Euteleostomi</taxon>
        <taxon>Mammalia</taxon>
        <taxon>Eutheria</taxon>
        <taxon>Euarchontoglires</taxon>
        <taxon>Glires</taxon>
        <taxon>Rodentia</taxon>
        <taxon>Myomorpha</taxon>
        <taxon>Muroidea</taxon>
        <taxon>Muridae</taxon>
        <taxon>Murinae</taxon>
        <taxon>Mus</taxon>
        <taxon>Mus</taxon>
    </lineage>
</organism>
<proteinExistence type="evidence at protein level"/>
<keyword id="KW-0002">3D-structure</keyword>
<keyword id="KW-0007">Acetylation</keyword>
<keyword id="KW-0903">Direct protein sequencing</keyword>
<keyword id="KW-0249">Electron transport</keyword>
<keyword id="KW-0472">Membrane</keyword>
<keyword id="KW-0496">Mitochondrion</keyword>
<keyword id="KW-0999">Mitochondrion inner membrane</keyword>
<keyword id="KW-0597">Phosphoprotein</keyword>
<keyword id="KW-1185">Reference proteome</keyword>
<keyword id="KW-0679">Respiratory chain</keyword>
<keyword id="KW-0813">Transport</keyword>
<comment type="function">
    <text evidence="2">Accessory subunit of the mitochondrial membrane respiratory chain NADH dehydrogenase (Complex I), that is believed to be not involved in catalysis. Complex I functions in the transfer of electrons from NADH to the respiratory chain. The immediate electron acceptor for the enzyme is believed to be ubiquinone.</text>
</comment>
<comment type="subunit">
    <text evidence="2">Mammalian complex I is composed of 45 different subunits.</text>
</comment>
<comment type="subcellular location">
    <subcellularLocation>
        <location evidence="2">Mitochondrion inner membrane</location>
        <topology evidence="2">Peripheral membrane protein</topology>
        <orientation evidence="2">Matrix side</orientation>
    </subcellularLocation>
</comment>
<comment type="similarity">
    <text evidence="3">Belongs to the complex I LYR family.</text>
</comment>